<name>HEMA_I87A3</name>
<sequence>MKTTIVLILLTHWVYSQNPTSGNNTATLCLGHHAVANGTLVKTITDDQIEVTNATELVQSISIGKICNNSYRVLDGRNCTLIDAMLGDPHCDVFQYENWDLFIERSSAFSNCYPYDIPDYASLRSIVASSGTLEFTAEGFTWTGVTQNGRSGACKRGSADSFFSRLNWLTKSGNSYPTLNVTMPNNNNFDKLYIWGIHHPSSNNEQTKLYIQESGRVTVSTKRSQQTIIPNIGSRPWVRGQSGRISIYWTIVKPGDILMINSNGNLVAPRGYFKLRTGKSSVMRSDAPIDTCVSECITPNGSIPNDKPFQNVNKVTYGKCPKYIRQNTLKLATGMRNVPEKQIRGIFGAIAGFIENGWEGMVDGWYGFRYQNSEGTGQAGDLKSTQAAIDQINGKLNRVIERTNEKFHQIEKEFSEVEGRIQDLEKYVEDTKIDLWSYNAELLVALENQHTIDLTDAEMNKLFEKTRRQLRENAEDMGGGCFRIYHKCDNACIGSIRNGTYDHYIYRDEALNNRFQIKGVELKSGYKDWILWISFAISCFLICVVLLGFIMWACQKGNIRCNICI</sequence>
<reference key="1">
    <citation type="journal article" date="1989" name="Virology">
        <title>Evolution of the hemagglutinin of equine H3 influenza viruses.</title>
        <authorList>
            <person name="Kawaoka Y."/>
            <person name="Bean W.J."/>
            <person name="Webster R.G."/>
        </authorList>
    </citation>
    <scope>NUCLEOTIDE SEQUENCE [GENOMIC RNA]</scope>
</reference>
<keyword id="KW-1167">Clathrin- and caveolin-independent endocytosis of virus by host</keyword>
<keyword id="KW-1165">Clathrin-mediated endocytosis of virus by host</keyword>
<keyword id="KW-1015">Disulfide bond</keyword>
<keyword id="KW-1170">Fusion of virus membrane with host endosomal membrane</keyword>
<keyword id="KW-1168">Fusion of virus membrane with host membrane</keyword>
<keyword id="KW-0325">Glycoprotein</keyword>
<keyword id="KW-0348">Hemagglutinin</keyword>
<keyword id="KW-1032">Host cell membrane</keyword>
<keyword id="KW-1043">Host membrane</keyword>
<keyword id="KW-0945">Host-virus interaction</keyword>
<keyword id="KW-0449">Lipoprotein</keyword>
<keyword id="KW-0472">Membrane</keyword>
<keyword id="KW-0564">Palmitate</keyword>
<keyword id="KW-0732">Signal</keyword>
<keyword id="KW-0812">Transmembrane</keyword>
<keyword id="KW-1133">Transmembrane helix</keyword>
<keyword id="KW-1161">Viral attachment to host cell</keyword>
<keyword id="KW-0261">Viral envelope protein</keyword>
<keyword id="KW-1162">Viral penetration into host cytoplasm</keyword>
<keyword id="KW-0946">Virion</keyword>
<keyword id="KW-1164">Virus endocytosis by host</keyword>
<keyword id="KW-1160">Virus entry into host cell</keyword>
<protein>
    <recommendedName>
        <fullName evidence="1">Hemagglutinin</fullName>
    </recommendedName>
    <component>
        <recommendedName>
            <fullName evidence="1">Hemagglutinin HA1 chain</fullName>
        </recommendedName>
    </component>
    <component>
        <recommendedName>
            <fullName evidence="1">Hemagglutinin HA2 chain</fullName>
        </recommendedName>
    </component>
</protein>
<accession>P16996</accession>
<accession>Q83994</accession>
<accession>Q83995</accession>
<dbReference type="EMBL" id="M24728">
    <property type="protein sequence ID" value="AAA43103.1"/>
    <property type="status" value="ALT_SEQ"/>
    <property type="molecule type" value="Genomic_RNA"/>
</dbReference>
<dbReference type="SMR" id="P16996"/>
<dbReference type="GlyCosmos" id="P16996">
    <property type="glycosylation" value="8 sites, No reported glycans"/>
</dbReference>
<dbReference type="GO" id="GO:0020002">
    <property type="term" value="C:host cell plasma membrane"/>
    <property type="evidence" value="ECO:0007669"/>
    <property type="project" value="UniProtKB-SubCell"/>
</dbReference>
<dbReference type="GO" id="GO:0016020">
    <property type="term" value="C:membrane"/>
    <property type="evidence" value="ECO:0007669"/>
    <property type="project" value="UniProtKB-UniRule"/>
</dbReference>
<dbReference type="GO" id="GO:0019031">
    <property type="term" value="C:viral envelope"/>
    <property type="evidence" value="ECO:0007669"/>
    <property type="project" value="UniProtKB-UniRule"/>
</dbReference>
<dbReference type="GO" id="GO:0055036">
    <property type="term" value="C:virion membrane"/>
    <property type="evidence" value="ECO:0007669"/>
    <property type="project" value="UniProtKB-SubCell"/>
</dbReference>
<dbReference type="GO" id="GO:0046789">
    <property type="term" value="F:host cell surface receptor binding"/>
    <property type="evidence" value="ECO:0007669"/>
    <property type="project" value="UniProtKB-UniRule"/>
</dbReference>
<dbReference type="GO" id="GO:0075512">
    <property type="term" value="P:clathrin-dependent endocytosis of virus by host cell"/>
    <property type="evidence" value="ECO:0007669"/>
    <property type="project" value="UniProtKB-UniRule"/>
</dbReference>
<dbReference type="GO" id="GO:0039654">
    <property type="term" value="P:fusion of virus membrane with host endosome membrane"/>
    <property type="evidence" value="ECO:0007669"/>
    <property type="project" value="UniProtKB-UniRule"/>
</dbReference>
<dbReference type="GO" id="GO:0019064">
    <property type="term" value="P:fusion of virus membrane with host plasma membrane"/>
    <property type="evidence" value="ECO:0007669"/>
    <property type="project" value="InterPro"/>
</dbReference>
<dbReference type="GO" id="GO:0046761">
    <property type="term" value="P:viral budding from plasma membrane"/>
    <property type="evidence" value="ECO:0007669"/>
    <property type="project" value="UniProtKB-UniRule"/>
</dbReference>
<dbReference type="GO" id="GO:0019062">
    <property type="term" value="P:virion attachment to host cell"/>
    <property type="evidence" value="ECO:0007669"/>
    <property type="project" value="UniProtKB-KW"/>
</dbReference>
<dbReference type="FunFam" id="3.90.20.10:FF:000001">
    <property type="entry name" value="Hemagglutinin"/>
    <property type="match status" value="1"/>
</dbReference>
<dbReference type="FunFam" id="3.90.209.20:FF:000001">
    <property type="entry name" value="Hemagglutinin"/>
    <property type="match status" value="1"/>
</dbReference>
<dbReference type="Gene3D" id="3.90.20.10">
    <property type="match status" value="1"/>
</dbReference>
<dbReference type="Gene3D" id="3.90.209.20">
    <property type="match status" value="1"/>
</dbReference>
<dbReference type="HAMAP" id="MF_04072">
    <property type="entry name" value="INFV_HEMA"/>
    <property type="match status" value="1"/>
</dbReference>
<dbReference type="InterPro" id="IPR008980">
    <property type="entry name" value="Capsid_hemagglutn"/>
</dbReference>
<dbReference type="InterPro" id="IPR013828">
    <property type="entry name" value="Hemagglutn_HA1_a/b_dom_sf"/>
</dbReference>
<dbReference type="InterPro" id="IPR000149">
    <property type="entry name" value="Hemagglutn_influenz_A"/>
</dbReference>
<dbReference type="InterPro" id="IPR001364">
    <property type="entry name" value="Hemagglutn_influenz_A/B"/>
</dbReference>
<dbReference type="Pfam" id="PF00509">
    <property type="entry name" value="Hemagglutinin"/>
    <property type="match status" value="1"/>
</dbReference>
<dbReference type="PRINTS" id="PR00330">
    <property type="entry name" value="HEMAGGLUTN1"/>
</dbReference>
<dbReference type="PRINTS" id="PR00329">
    <property type="entry name" value="HEMAGGLUTN12"/>
</dbReference>
<dbReference type="SUPFAM" id="SSF58064">
    <property type="entry name" value="Influenza hemagglutinin (stalk)"/>
    <property type="match status" value="1"/>
</dbReference>
<dbReference type="SUPFAM" id="SSF49818">
    <property type="entry name" value="Viral protein domain"/>
    <property type="match status" value="1"/>
</dbReference>
<gene>
    <name evidence="1" type="primary">HA</name>
</gene>
<organism>
    <name type="scientific">Influenza A virus (strain A/Equine/Kentucky/1/1987 H3N8)</name>
    <dbReference type="NCBI Taxonomy" id="387219"/>
    <lineage>
        <taxon>Viruses</taxon>
        <taxon>Riboviria</taxon>
        <taxon>Orthornavirae</taxon>
        <taxon>Negarnaviricota</taxon>
        <taxon>Polyploviricotina</taxon>
        <taxon>Insthoviricetes</taxon>
        <taxon>Articulavirales</taxon>
        <taxon>Orthomyxoviridae</taxon>
        <taxon>Alphainfluenzavirus</taxon>
        <taxon>Alphainfluenzavirus influenzae</taxon>
        <taxon>Influenza A virus</taxon>
    </lineage>
</organism>
<comment type="function">
    <text>Binds to sialic acid-containing receptors on the cell surface, bringing about the attachment of the virus particle to the cell. This attachment induces virion internalization of about two third of the virus particles through clathrin-dependent endocytosis and about one third through a clathrin- and caveolin-independent pathway. Plays a major role in the determination of host range restriction and virulence. Class I viral fusion protein. Responsible for penetration of the virus into the cell cytoplasm by mediating the fusion of the membrane of the endocytosed virus particle with the endosomal membrane. Low pH in endosomes induces an irreversible conformational change in HA2, releasing the fusion hydrophobic peptide. Several trimers are required to form a competent fusion pore.</text>
</comment>
<comment type="function">
    <text evidence="1">Binds to sialic acid-containing receptors on the cell surface, bringing about the attachment of the virus particle to the cell. This attachment induces virion internalization either through clathrin-dependent endocytosis or through clathrin- and caveolin-independent pathway. Plays a major role in the determination of host range restriction and virulence. Class I viral fusion protein. Responsible for penetration of the virus into the cell cytoplasm by mediating the fusion of the membrane of the endocytosed virus particle with the endosomal membrane. Low pH in endosomes induces an irreversible conformational change in HA2, releasing the fusion hydrophobic peptide. Several trimers are required to form a competent fusion pore.</text>
</comment>
<comment type="subunit">
    <text evidence="1">Homotrimer of disulfide-linked HA1-HA2.</text>
</comment>
<comment type="subcellular location">
    <subcellularLocation>
        <location evidence="1">Virion membrane</location>
        <topology evidence="1">Single-pass type I membrane protein</topology>
    </subcellularLocation>
    <subcellularLocation>
        <location evidence="1">Host apical cell membrane</location>
        <topology evidence="1">Single-pass type I membrane protein</topology>
    </subcellularLocation>
    <text evidence="1">Targeted to the apical plasma membrane in epithelial polarized cells through a signal present in the transmembrane domain. Associated with glycosphingolipid- and cholesterol-enriched detergent-resistant lipid rafts.</text>
</comment>
<comment type="PTM">
    <text evidence="1">Palmitoylated.</text>
</comment>
<comment type="PTM">
    <text evidence="1">In natural infection, inactive HA is matured into HA1 and HA2 outside the cell by one or more trypsin-like, arginine-specific endoprotease secreted by the bronchial epithelial cells. One identified protease that may be involved in this process is secreted in lungs by club cells.</text>
</comment>
<comment type="miscellaneous">
    <text>Major glycoprotein, comprises over 80% of the envelope proteins present in virus particle.</text>
</comment>
<comment type="miscellaneous">
    <text>The extent of infection into host organism is determined by HA. Influenza viruses bud from the apical surface of polarized epithelial cells (e.g. bronchial epithelial cells) into lumen of lungs and are therefore usually pneumotropic. The reason is that HA is cleaved by tryptase clara which is restricted to lungs. However, HAs of H5 and H7 pantropic avian viruses subtypes can be cleaved by furin and subtilisin-type enzymes, allowing the virus to grow in other organs than lungs.</text>
</comment>
<comment type="miscellaneous">
    <text evidence="2">The influenza A genome consist of 8 RNA segments. Genetic variation of hemagglutinin and/or neuraminidase genes results in the emergence of new influenza strains. The mechanism of variation can be the result of point mutations or the result of genetic reassortment between segments of two different strains.</text>
</comment>
<comment type="similarity">
    <text evidence="1">Belongs to the influenza viruses hemagglutinin family.</text>
</comment>
<evidence type="ECO:0000255" key="1">
    <source>
        <dbReference type="HAMAP-Rule" id="MF_04072"/>
    </source>
</evidence>
<evidence type="ECO:0000305" key="2"/>
<proteinExistence type="inferred from homology"/>
<organismHost>
    <name type="scientific">Aves</name>
    <dbReference type="NCBI Taxonomy" id="8782"/>
</organismHost>
<organismHost>
    <name type="scientific">Equus caballus</name>
    <name type="common">Horse</name>
    <dbReference type="NCBI Taxonomy" id="9796"/>
</organismHost>
<feature type="signal peptide" evidence="1">
    <location>
        <begin position="1"/>
        <end position="16"/>
    </location>
</feature>
<feature type="chain" id="PRO_0000440526" description="Hemagglutinin" evidence="1">
    <location>
        <begin position="17"/>
        <end position="565"/>
    </location>
</feature>
<feature type="chain" id="PRO_0000038980" description="Hemagglutinin HA1 chain">
    <location>
        <begin position="17"/>
        <end position="343"/>
    </location>
</feature>
<feature type="chain" id="PRO_0000038981" description="Hemagglutinin HA2 chain" evidence="1">
    <location>
        <begin position="345"/>
        <end position="565"/>
    </location>
</feature>
<feature type="topological domain" description="Extracellular" evidence="1">
    <location>
        <begin position="17"/>
        <end position="529"/>
    </location>
</feature>
<feature type="transmembrane region" description="Helical" evidence="1">
    <location>
        <begin position="530"/>
        <end position="550"/>
    </location>
</feature>
<feature type="topological domain" description="Cytoplasmic" evidence="1">
    <location>
        <begin position="551"/>
        <end position="565"/>
    </location>
</feature>
<feature type="site" description="Cleavage; by host" evidence="1">
    <location>
        <begin position="344"/>
        <end position="345"/>
    </location>
</feature>
<feature type="lipid moiety-binding region" description="S-palmitoyl cysteine; by host" evidence="1">
    <location>
        <position position="554"/>
    </location>
</feature>
<feature type="lipid moiety-binding region" description="S-palmitoyl cysteine; by host" evidence="1">
    <location>
        <position position="561"/>
    </location>
</feature>
<feature type="lipid moiety-binding region" description="S-palmitoyl cysteine; by host" evidence="1">
    <location>
        <position position="564"/>
    </location>
</feature>
<feature type="glycosylation site" description="N-linked (GlcNAc...) asparagine; by host" evidence="1">
    <location>
        <position position="23"/>
    </location>
</feature>
<feature type="glycosylation site" description="N-linked (GlcNAc...) asparagine; by host" evidence="1">
    <location>
        <position position="37"/>
    </location>
</feature>
<feature type="glycosylation site" description="N-linked (GlcNAc...) asparagine; by host" evidence="1">
    <location>
        <position position="53"/>
    </location>
</feature>
<feature type="glycosylation site" description="N-linked (GlcNAc...) asparagine; by host" evidence="1">
    <location>
        <position position="68"/>
    </location>
</feature>
<feature type="glycosylation site" description="N-linked (GlcNAc...) asparagine; by host" evidence="1">
    <location>
        <position position="78"/>
    </location>
</feature>
<feature type="glycosylation site" description="N-linked (GlcNAc...) asparagine; by host" evidence="1">
    <location>
        <position position="180"/>
    </location>
</feature>
<feature type="glycosylation site" description="N-linked (GlcNAc...) asparagine; by host" evidence="1">
    <location>
        <position position="300"/>
    </location>
</feature>
<feature type="glycosylation site" description="N-linked (GlcNAc...) asparagine; by host" evidence="1">
    <location>
        <position position="498"/>
    </location>
</feature>
<feature type="disulfide bond" description="Interchain (between HA1 and HA2 chains)" evidence="1">
    <location>
        <begin position="29"/>
        <end position="481"/>
    </location>
</feature>
<feature type="disulfide bond" evidence="1">
    <location>
        <begin position="67"/>
        <end position="292"/>
    </location>
</feature>
<feature type="disulfide bond" evidence="1">
    <location>
        <begin position="79"/>
        <end position="91"/>
    </location>
</feature>
<feature type="disulfide bond" evidence="1">
    <location>
        <begin position="112"/>
        <end position="154"/>
    </location>
</feature>
<feature type="disulfide bond" evidence="1">
    <location>
        <begin position="296"/>
        <end position="320"/>
    </location>
</feature>
<feature type="disulfide bond" evidence="1">
    <location>
        <begin position="488"/>
        <end position="492"/>
    </location>
</feature>